<name>PIMT_BURTA</name>
<reference key="1">
    <citation type="journal article" date="2005" name="BMC Genomics">
        <title>Bacterial genome adaptation to niches: divergence of the potential virulence genes in three Burkholderia species of different survival strategies.</title>
        <authorList>
            <person name="Kim H.S."/>
            <person name="Schell M.A."/>
            <person name="Yu Y."/>
            <person name="Ulrich R.L."/>
            <person name="Sarria S.H."/>
            <person name="Nierman W.C."/>
            <person name="DeShazer D."/>
        </authorList>
    </citation>
    <scope>NUCLEOTIDE SEQUENCE [LARGE SCALE GENOMIC DNA]</scope>
    <source>
        <strain>ATCC 700388 / DSM 13276 / CCUG 48851 / CIP 106301 / E264</strain>
    </source>
</reference>
<proteinExistence type="inferred from homology"/>
<gene>
    <name evidence="1" type="primary">pcm</name>
    <name type="ordered locus">BTH_I2224</name>
</gene>
<comment type="function">
    <text evidence="1">Catalyzes the methyl esterification of L-isoaspartyl residues in peptides and proteins that result from spontaneous decomposition of normal L-aspartyl and L-asparaginyl residues. It plays a role in the repair and/or degradation of damaged proteins.</text>
</comment>
<comment type="catalytic activity">
    <reaction evidence="1">
        <text>[protein]-L-isoaspartate + S-adenosyl-L-methionine = [protein]-L-isoaspartate alpha-methyl ester + S-adenosyl-L-homocysteine</text>
        <dbReference type="Rhea" id="RHEA:12705"/>
        <dbReference type="Rhea" id="RHEA-COMP:12143"/>
        <dbReference type="Rhea" id="RHEA-COMP:12144"/>
        <dbReference type="ChEBI" id="CHEBI:57856"/>
        <dbReference type="ChEBI" id="CHEBI:59789"/>
        <dbReference type="ChEBI" id="CHEBI:90596"/>
        <dbReference type="ChEBI" id="CHEBI:90598"/>
        <dbReference type="EC" id="2.1.1.77"/>
    </reaction>
</comment>
<comment type="subcellular location">
    <subcellularLocation>
        <location evidence="1">Cytoplasm</location>
    </subcellularLocation>
</comment>
<comment type="similarity">
    <text evidence="1">Belongs to the methyltransferase superfamily. L-isoaspartyl/D-aspartyl protein methyltransferase family.</text>
</comment>
<feature type="chain" id="PRO_0000351839" description="Protein-L-isoaspartate O-methyltransferase">
    <location>
        <begin position="1"/>
        <end position="327"/>
    </location>
</feature>
<feature type="region of interest" description="Disordered" evidence="2">
    <location>
        <begin position="1"/>
        <end position="38"/>
    </location>
</feature>
<feature type="region of interest" description="Disordered" evidence="2">
    <location>
        <begin position="62"/>
        <end position="105"/>
    </location>
</feature>
<feature type="compositionally biased region" description="Basic and acidic residues" evidence="2">
    <location>
        <begin position="14"/>
        <end position="29"/>
    </location>
</feature>
<feature type="compositionally biased region" description="Low complexity" evidence="2">
    <location>
        <begin position="62"/>
        <end position="77"/>
    </location>
</feature>
<feature type="compositionally biased region" description="Polar residues" evidence="2">
    <location>
        <begin position="92"/>
        <end position="105"/>
    </location>
</feature>
<feature type="active site" evidence="1">
    <location>
        <position position="175"/>
    </location>
</feature>
<accession>Q2SWF4</accession>
<dbReference type="EC" id="2.1.1.77" evidence="1"/>
<dbReference type="EMBL" id="CP000086">
    <property type="protein sequence ID" value="ABC37005.1"/>
    <property type="molecule type" value="Genomic_DNA"/>
</dbReference>
<dbReference type="RefSeq" id="WP_011402299.1">
    <property type="nucleotide sequence ID" value="NZ_CP008785.1"/>
</dbReference>
<dbReference type="SMR" id="Q2SWF4"/>
<dbReference type="GeneID" id="45121942"/>
<dbReference type="KEGG" id="bte:BTH_I2224"/>
<dbReference type="HOGENOM" id="CLU_055432_1_0_4"/>
<dbReference type="Proteomes" id="UP000001930">
    <property type="component" value="Chromosome I"/>
</dbReference>
<dbReference type="GO" id="GO:0005737">
    <property type="term" value="C:cytoplasm"/>
    <property type="evidence" value="ECO:0007669"/>
    <property type="project" value="UniProtKB-SubCell"/>
</dbReference>
<dbReference type="GO" id="GO:0004719">
    <property type="term" value="F:protein-L-isoaspartate (D-aspartate) O-methyltransferase activity"/>
    <property type="evidence" value="ECO:0007669"/>
    <property type="project" value="UniProtKB-UniRule"/>
</dbReference>
<dbReference type="GO" id="GO:0032259">
    <property type="term" value="P:methylation"/>
    <property type="evidence" value="ECO:0007669"/>
    <property type="project" value="UniProtKB-KW"/>
</dbReference>
<dbReference type="GO" id="GO:0036211">
    <property type="term" value="P:protein modification process"/>
    <property type="evidence" value="ECO:0007669"/>
    <property type="project" value="UniProtKB-UniRule"/>
</dbReference>
<dbReference type="GO" id="GO:0030091">
    <property type="term" value="P:protein repair"/>
    <property type="evidence" value="ECO:0007669"/>
    <property type="project" value="UniProtKB-UniRule"/>
</dbReference>
<dbReference type="CDD" id="cd02440">
    <property type="entry name" value="AdoMet_MTases"/>
    <property type="match status" value="1"/>
</dbReference>
<dbReference type="FunFam" id="3.40.50.150:FF:000010">
    <property type="entry name" value="Protein-L-isoaspartate O-methyltransferase"/>
    <property type="match status" value="1"/>
</dbReference>
<dbReference type="Gene3D" id="3.40.50.150">
    <property type="entry name" value="Vaccinia Virus protein VP39"/>
    <property type="match status" value="1"/>
</dbReference>
<dbReference type="HAMAP" id="MF_00090">
    <property type="entry name" value="PIMT"/>
    <property type="match status" value="1"/>
</dbReference>
<dbReference type="InterPro" id="IPR000682">
    <property type="entry name" value="PCMT"/>
</dbReference>
<dbReference type="InterPro" id="IPR029063">
    <property type="entry name" value="SAM-dependent_MTases_sf"/>
</dbReference>
<dbReference type="NCBIfam" id="TIGR00080">
    <property type="entry name" value="pimt"/>
    <property type="match status" value="1"/>
</dbReference>
<dbReference type="NCBIfam" id="NF001453">
    <property type="entry name" value="PRK00312.1"/>
    <property type="match status" value="1"/>
</dbReference>
<dbReference type="PANTHER" id="PTHR11579">
    <property type="entry name" value="PROTEIN-L-ISOASPARTATE O-METHYLTRANSFERASE"/>
    <property type="match status" value="1"/>
</dbReference>
<dbReference type="PANTHER" id="PTHR11579:SF0">
    <property type="entry name" value="PROTEIN-L-ISOASPARTATE(D-ASPARTATE) O-METHYLTRANSFERASE"/>
    <property type="match status" value="1"/>
</dbReference>
<dbReference type="Pfam" id="PF01135">
    <property type="entry name" value="PCMT"/>
    <property type="match status" value="1"/>
</dbReference>
<dbReference type="SUPFAM" id="SSF53335">
    <property type="entry name" value="S-adenosyl-L-methionine-dependent methyltransferases"/>
    <property type="match status" value="1"/>
</dbReference>
<dbReference type="PROSITE" id="PS01279">
    <property type="entry name" value="PCMT"/>
    <property type="match status" value="1"/>
</dbReference>
<organism>
    <name type="scientific">Burkholderia thailandensis (strain ATCC 700388 / DSM 13276 / CCUG 48851 / CIP 106301 / E264)</name>
    <dbReference type="NCBI Taxonomy" id="271848"/>
    <lineage>
        <taxon>Bacteria</taxon>
        <taxon>Pseudomonadati</taxon>
        <taxon>Pseudomonadota</taxon>
        <taxon>Betaproteobacteria</taxon>
        <taxon>Burkholderiales</taxon>
        <taxon>Burkholderiaceae</taxon>
        <taxon>Burkholderia</taxon>
        <taxon>pseudomallei group</taxon>
    </lineage>
</organism>
<sequence>MSGERAKRFPLALEDLKREPRKPEGRAAERQAAGDAARQRLIAAAAAAPAAASPIAPERLAPRAAGASGSGVPVAKPARAKPPTTPGVAKSAPSSGVKNGDKSATPNVALSGALALTSERVRERMVERLRANGVADPRVLAAMSAVPRHMFVDPGLAAQAYEDAALPIGHQQTISKPSVVARMIELAAAGRTLERVLEIGTGCGYQAAVLSRVARDVYSIERVKPLYERAKLNLRPLRVPNIRLHYGDGRVGLPAAAPFDAIVIAAAGLDVPRALLEQLAIGGRLVAPVGEQAGEQVLTLVERVAPAQWRESRLDRVFFVPLKSGVI</sequence>
<protein>
    <recommendedName>
        <fullName evidence="1">Protein-L-isoaspartate O-methyltransferase</fullName>
        <ecNumber evidence="1">2.1.1.77</ecNumber>
    </recommendedName>
    <alternativeName>
        <fullName evidence="1">L-isoaspartyl protein carboxyl methyltransferase</fullName>
    </alternativeName>
    <alternativeName>
        <fullName evidence="1">Protein L-isoaspartyl methyltransferase</fullName>
    </alternativeName>
    <alternativeName>
        <fullName evidence="1">Protein-beta-aspartate methyltransferase</fullName>
        <shortName evidence="1">PIMT</shortName>
    </alternativeName>
</protein>
<evidence type="ECO:0000255" key="1">
    <source>
        <dbReference type="HAMAP-Rule" id="MF_00090"/>
    </source>
</evidence>
<evidence type="ECO:0000256" key="2">
    <source>
        <dbReference type="SAM" id="MobiDB-lite"/>
    </source>
</evidence>
<keyword id="KW-0963">Cytoplasm</keyword>
<keyword id="KW-0489">Methyltransferase</keyword>
<keyword id="KW-0949">S-adenosyl-L-methionine</keyword>
<keyword id="KW-0808">Transferase</keyword>